<reference key="1">
    <citation type="journal article" date="2010" name="PLoS ONE">
        <title>The complete multipartite genome sequence of Cupriavidus necator JMP134, a versatile pollutant degrader.</title>
        <authorList>
            <person name="Lykidis A."/>
            <person name="Perez-Pantoja D."/>
            <person name="Ledger T."/>
            <person name="Mavromatis K."/>
            <person name="Anderson I.J."/>
            <person name="Ivanova N.N."/>
            <person name="Hooper S.D."/>
            <person name="Lapidus A."/>
            <person name="Lucas S."/>
            <person name="Gonzalez B."/>
            <person name="Kyrpides N.C."/>
        </authorList>
    </citation>
    <scope>NUCLEOTIDE SEQUENCE [LARGE SCALE GENOMIC DNA]</scope>
    <source>
        <strain>JMP134 / LMG 1197</strain>
    </source>
</reference>
<dbReference type="EC" id="7.6.2.5" evidence="1"/>
<dbReference type="EMBL" id="CP000091">
    <property type="protein sequence ID" value="AAZ64114.1"/>
    <property type="molecule type" value="Genomic_DNA"/>
</dbReference>
<dbReference type="SMR" id="Q46RX0"/>
<dbReference type="STRING" id="264198.Reut_B4766"/>
<dbReference type="KEGG" id="reu:Reut_B4766"/>
<dbReference type="eggNOG" id="COG4133">
    <property type="taxonomic scope" value="Bacteria"/>
</dbReference>
<dbReference type="HOGENOM" id="CLU_000604_1_2_4"/>
<dbReference type="OrthoDB" id="9800654at2"/>
<dbReference type="GO" id="GO:0005886">
    <property type="term" value="C:plasma membrane"/>
    <property type="evidence" value="ECO:0007669"/>
    <property type="project" value="UniProtKB-SubCell"/>
</dbReference>
<dbReference type="GO" id="GO:0015439">
    <property type="term" value="F:ABC-type heme transporter activity"/>
    <property type="evidence" value="ECO:0007669"/>
    <property type="project" value="UniProtKB-EC"/>
</dbReference>
<dbReference type="GO" id="GO:0005524">
    <property type="term" value="F:ATP binding"/>
    <property type="evidence" value="ECO:0007669"/>
    <property type="project" value="UniProtKB-KW"/>
</dbReference>
<dbReference type="GO" id="GO:0016887">
    <property type="term" value="F:ATP hydrolysis activity"/>
    <property type="evidence" value="ECO:0007669"/>
    <property type="project" value="InterPro"/>
</dbReference>
<dbReference type="GO" id="GO:0017004">
    <property type="term" value="P:cytochrome complex assembly"/>
    <property type="evidence" value="ECO:0007669"/>
    <property type="project" value="UniProtKB-KW"/>
</dbReference>
<dbReference type="Gene3D" id="3.40.50.300">
    <property type="entry name" value="P-loop containing nucleotide triphosphate hydrolases"/>
    <property type="match status" value="1"/>
</dbReference>
<dbReference type="InterPro" id="IPR003593">
    <property type="entry name" value="AAA+_ATPase"/>
</dbReference>
<dbReference type="InterPro" id="IPR003439">
    <property type="entry name" value="ABC_transporter-like_ATP-bd"/>
</dbReference>
<dbReference type="InterPro" id="IPR017871">
    <property type="entry name" value="ABC_transporter-like_CS"/>
</dbReference>
<dbReference type="InterPro" id="IPR005895">
    <property type="entry name" value="ABC_transptr_haem_export_CcmA"/>
</dbReference>
<dbReference type="InterPro" id="IPR027417">
    <property type="entry name" value="P-loop_NTPase"/>
</dbReference>
<dbReference type="NCBIfam" id="TIGR01189">
    <property type="entry name" value="ccmA"/>
    <property type="match status" value="1"/>
</dbReference>
<dbReference type="NCBIfam" id="NF010061">
    <property type="entry name" value="PRK13538.1"/>
    <property type="match status" value="1"/>
</dbReference>
<dbReference type="PANTHER" id="PTHR43499">
    <property type="entry name" value="ABC TRANSPORTER I FAMILY MEMBER 1"/>
    <property type="match status" value="1"/>
</dbReference>
<dbReference type="PANTHER" id="PTHR43499:SF1">
    <property type="entry name" value="ABC TRANSPORTER I FAMILY MEMBER 1"/>
    <property type="match status" value="1"/>
</dbReference>
<dbReference type="Pfam" id="PF00005">
    <property type="entry name" value="ABC_tran"/>
    <property type="match status" value="1"/>
</dbReference>
<dbReference type="SMART" id="SM00382">
    <property type="entry name" value="AAA"/>
    <property type="match status" value="1"/>
</dbReference>
<dbReference type="SUPFAM" id="SSF52540">
    <property type="entry name" value="P-loop containing nucleoside triphosphate hydrolases"/>
    <property type="match status" value="1"/>
</dbReference>
<dbReference type="PROSITE" id="PS00211">
    <property type="entry name" value="ABC_TRANSPORTER_1"/>
    <property type="match status" value="1"/>
</dbReference>
<dbReference type="PROSITE" id="PS50893">
    <property type="entry name" value="ABC_TRANSPORTER_2"/>
    <property type="match status" value="1"/>
</dbReference>
<dbReference type="PROSITE" id="PS51243">
    <property type="entry name" value="CCMA"/>
    <property type="match status" value="1"/>
</dbReference>
<proteinExistence type="inferred from homology"/>
<evidence type="ECO:0000255" key="1">
    <source>
        <dbReference type="HAMAP-Rule" id="MF_01707"/>
    </source>
</evidence>
<accession>Q46RX0</accession>
<sequence>MPTPSSGLSCNGVAVGPVLRANDLAFSRGGRPVFTGIDFSVSAGGVIQVVGPNGSGKSSLLRVLSGLLQPASGSVSWLGKCVRAGDPAYLQSLAYVGHADGIDTDLTADEHLRYAARLTGLHATNETVRVALARLGIAKTMHVPIRTLSQGQRRRVALARLALVWRALWLLDEPLTSLDDESAACFHDLLDEHLRDGGMAVIATHRLLPGGGEVLQLGGAHALPPA</sequence>
<feature type="chain" id="PRO_0000271943" description="Cytochrome c biogenesis ATP-binding export protein CcmA">
    <location>
        <begin position="1"/>
        <end position="226"/>
    </location>
</feature>
<feature type="domain" description="ABC transporter" evidence="1">
    <location>
        <begin position="19"/>
        <end position="226"/>
    </location>
</feature>
<feature type="binding site" evidence="1">
    <location>
        <begin position="51"/>
        <end position="58"/>
    </location>
    <ligand>
        <name>ATP</name>
        <dbReference type="ChEBI" id="CHEBI:30616"/>
    </ligand>
</feature>
<gene>
    <name evidence="1" type="primary">ccmA</name>
    <name type="ordered locus">Reut_B4766</name>
</gene>
<name>CCMA_CUPPJ</name>
<protein>
    <recommendedName>
        <fullName evidence="1">Cytochrome c biogenesis ATP-binding export protein CcmA</fullName>
        <ecNumber evidence="1">7.6.2.5</ecNumber>
    </recommendedName>
    <alternativeName>
        <fullName evidence="1">Heme exporter protein A</fullName>
    </alternativeName>
</protein>
<organism>
    <name type="scientific">Cupriavidus pinatubonensis (strain JMP 134 / LMG 1197)</name>
    <name type="common">Cupriavidus necator (strain JMP 134)</name>
    <dbReference type="NCBI Taxonomy" id="264198"/>
    <lineage>
        <taxon>Bacteria</taxon>
        <taxon>Pseudomonadati</taxon>
        <taxon>Pseudomonadota</taxon>
        <taxon>Betaproteobacteria</taxon>
        <taxon>Burkholderiales</taxon>
        <taxon>Burkholderiaceae</taxon>
        <taxon>Cupriavidus</taxon>
    </lineage>
</organism>
<comment type="function">
    <text evidence="1">Part of the ABC transporter complex CcmAB involved in the biogenesis of c-type cytochromes; once thought to export heme, this seems not to be the case, but its exact role is uncertain. Responsible for energy coupling to the transport system.</text>
</comment>
<comment type="catalytic activity">
    <reaction evidence="1">
        <text>heme b(in) + ATP + H2O = heme b(out) + ADP + phosphate + H(+)</text>
        <dbReference type="Rhea" id="RHEA:19261"/>
        <dbReference type="ChEBI" id="CHEBI:15377"/>
        <dbReference type="ChEBI" id="CHEBI:15378"/>
        <dbReference type="ChEBI" id="CHEBI:30616"/>
        <dbReference type="ChEBI" id="CHEBI:43474"/>
        <dbReference type="ChEBI" id="CHEBI:60344"/>
        <dbReference type="ChEBI" id="CHEBI:456216"/>
        <dbReference type="EC" id="7.6.2.5"/>
    </reaction>
</comment>
<comment type="subunit">
    <text evidence="1">The complex is composed of two ATP-binding proteins (CcmA) and two transmembrane proteins (CcmB).</text>
</comment>
<comment type="subcellular location">
    <subcellularLocation>
        <location evidence="1">Cell inner membrane</location>
        <topology evidence="1">Peripheral membrane protein</topology>
    </subcellularLocation>
</comment>
<comment type="similarity">
    <text evidence="1">Belongs to the ABC transporter superfamily. CcmA exporter (TC 3.A.1.107) family.</text>
</comment>
<keyword id="KW-0067">ATP-binding</keyword>
<keyword id="KW-0997">Cell inner membrane</keyword>
<keyword id="KW-1003">Cell membrane</keyword>
<keyword id="KW-0201">Cytochrome c-type biogenesis</keyword>
<keyword id="KW-0472">Membrane</keyword>
<keyword id="KW-0547">Nucleotide-binding</keyword>
<keyword id="KW-1278">Translocase</keyword>
<keyword id="KW-0813">Transport</keyword>